<accession>Q6N3W7</accession>
<organism>
    <name type="scientific">Rhodopseudomonas palustris (strain ATCC BAA-98 / CGA009)</name>
    <dbReference type="NCBI Taxonomy" id="258594"/>
    <lineage>
        <taxon>Bacteria</taxon>
        <taxon>Pseudomonadati</taxon>
        <taxon>Pseudomonadota</taxon>
        <taxon>Alphaproteobacteria</taxon>
        <taxon>Hyphomicrobiales</taxon>
        <taxon>Nitrobacteraceae</taxon>
        <taxon>Rhodopseudomonas</taxon>
    </lineage>
</organism>
<reference key="1">
    <citation type="journal article" date="2004" name="Nat. Biotechnol.">
        <title>Complete genome sequence of the metabolically versatile photosynthetic bacterium Rhodopseudomonas palustris.</title>
        <authorList>
            <person name="Larimer F.W."/>
            <person name="Chain P."/>
            <person name="Hauser L."/>
            <person name="Lamerdin J.E."/>
            <person name="Malfatti S."/>
            <person name="Do L."/>
            <person name="Land M.L."/>
            <person name="Pelletier D.A."/>
            <person name="Beatty J.T."/>
            <person name="Lang A.S."/>
            <person name="Tabita F.R."/>
            <person name="Gibson J.L."/>
            <person name="Hanson T.E."/>
            <person name="Bobst C."/>
            <person name="Torres y Torres J.L."/>
            <person name="Peres C."/>
            <person name="Harrison F.H."/>
            <person name="Gibson J."/>
            <person name="Harwood C.S."/>
        </authorList>
    </citation>
    <scope>NUCLEOTIDE SEQUENCE [LARGE SCALE GENOMIC DNA]</scope>
    <source>
        <strain>ATCC BAA-98 / CGA009</strain>
    </source>
</reference>
<protein>
    <recommendedName>
        <fullName evidence="1">Thiazole synthase</fullName>
        <ecNumber evidence="1">2.8.1.10</ecNumber>
    </recommendedName>
</protein>
<evidence type="ECO:0000255" key="1">
    <source>
        <dbReference type="HAMAP-Rule" id="MF_00443"/>
    </source>
</evidence>
<gene>
    <name evidence="1" type="primary">thiG</name>
    <name type="ordered locus">RPA3575</name>
</gene>
<name>THIG_RHOPA</name>
<dbReference type="EC" id="2.8.1.10" evidence="1"/>
<dbReference type="EMBL" id="BX572604">
    <property type="protein sequence ID" value="CAE29016.1"/>
    <property type="molecule type" value="Genomic_DNA"/>
</dbReference>
<dbReference type="RefSeq" id="WP_011159115.1">
    <property type="nucleotide sequence ID" value="NZ_CP116810.1"/>
</dbReference>
<dbReference type="SMR" id="Q6N3W7"/>
<dbReference type="STRING" id="258594.RPA3575"/>
<dbReference type="GeneID" id="66894678"/>
<dbReference type="eggNOG" id="COG2022">
    <property type="taxonomic scope" value="Bacteria"/>
</dbReference>
<dbReference type="HOGENOM" id="CLU_062233_1_0_5"/>
<dbReference type="PhylomeDB" id="Q6N3W7"/>
<dbReference type="UniPathway" id="UPA00060"/>
<dbReference type="GO" id="GO:0005737">
    <property type="term" value="C:cytoplasm"/>
    <property type="evidence" value="ECO:0007669"/>
    <property type="project" value="UniProtKB-SubCell"/>
</dbReference>
<dbReference type="GO" id="GO:1990107">
    <property type="term" value="F:thiazole synthase activity"/>
    <property type="evidence" value="ECO:0007669"/>
    <property type="project" value="UniProtKB-EC"/>
</dbReference>
<dbReference type="GO" id="GO:0009229">
    <property type="term" value="P:thiamine diphosphate biosynthetic process"/>
    <property type="evidence" value="ECO:0007669"/>
    <property type="project" value="UniProtKB-UniRule"/>
</dbReference>
<dbReference type="CDD" id="cd04728">
    <property type="entry name" value="ThiG"/>
    <property type="match status" value="1"/>
</dbReference>
<dbReference type="Gene3D" id="3.20.20.70">
    <property type="entry name" value="Aldolase class I"/>
    <property type="match status" value="1"/>
</dbReference>
<dbReference type="HAMAP" id="MF_00443">
    <property type="entry name" value="ThiG"/>
    <property type="match status" value="1"/>
</dbReference>
<dbReference type="InterPro" id="IPR013785">
    <property type="entry name" value="Aldolase_TIM"/>
</dbReference>
<dbReference type="InterPro" id="IPR033983">
    <property type="entry name" value="Thiazole_synthase_ThiG"/>
</dbReference>
<dbReference type="InterPro" id="IPR008867">
    <property type="entry name" value="ThiG"/>
</dbReference>
<dbReference type="PANTHER" id="PTHR34266">
    <property type="entry name" value="THIAZOLE SYNTHASE"/>
    <property type="match status" value="1"/>
</dbReference>
<dbReference type="PANTHER" id="PTHR34266:SF2">
    <property type="entry name" value="THIAZOLE SYNTHASE"/>
    <property type="match status" value="1"/>
</dbReference>
<dbReference type="Pfam" id="PF05690">
    <property type="entry name" value="ThiG"/>
    <property type="match status" value="1"/>
</dbReference>
<dbReference type="SUPFAM" id="SSF110399">
    <property type="entry name" value="ThiG-like"/>
    <property type="match status" value="1"/>
</dbReference>
<keyword id="KW-0963">Cytoplasm</keyword>
<keyword id="KW-0704">Schiff base</keyword>
<keyword id="KW-0784">Thiamine biosynthesis</keyword>
<keyword id="KW-0808">Transferase</keyword>
<feature type="chain" id="PRO_0000162853" description="Thiazole synthase">
    <location>
        <begin position="1"/>
        <end position="260"/>
    </location>
</feature>
<feature type="active site" description="Schiff-base intermediate with DXP" evidence="1">
    <location>
        <position position="96"/>
    </location>
</feature>
<feature type="binding site" evidence="1">
    <location>
        <position position="157"/>
    </location>
    <ligand>
        <name>1-deoxy-D-xylulose 5-phosphate</name>
        <dbReference type="ChEBI" id="CHEBI:57792"/>
    </ligand>
</feature>
<feature type="binding site" evidence="1">
    <location>
        <begin position="184"/>
        <end position="185"/>
    </location>
    <ligand>
        <name>1-deoxy-D-xylulose 5-phosphate</name>
        <dbReference type="ChEBI" id="CHEBI:57792"/>
    </ligand>
</feature>
<feature type="binding site" evidence="1">
    <location>
        <begin position="206"/>
        <end position="207"/>
    </location>
    <ligand>
        <name>1-deoxy-D-xylulose 5-phosphate</name>
        <dbReference type="ChEBI" id="CHEBI:57792"/>
    </ligand>
</feature>
<sequence>MVKFYDREFGSRLLIGSALYPSPAIMQDSIRESGAEIVTVSLRRETAGGKAGDQFWSLIRELGVTVLPNTAGCRGVRDAVTTAKLARELFATSWIKLEVIADNDTLQPDVVGLVEAAQILIKDGFEVFPYCTEDLSVAMRLVDAGCRVVMPWAAPIGSARGITNRDALKLLRDRLPDITLVVDAGLGAPSHAAEAMELGYDAVLLNTAIAKAEDPVAMARGFKLAIEAGRTGFEAGLMGARDFASPSTPVIGTPFWHAVS</sequence>
<proteinExistence type="inferred from homology"/>
<comment type="function">
    <text evidence="1">Catalyzes the rearrangement of 1-deoxy-D-xylulose 5-phosphate (DXP) to produce the thiazole phosphate moiety of thiamine. Sulfur is provided by the thiocarboxylate moiety of the carrier protein ThiS. In vitro, sulfur can be provided by H(2)S.</text>
</comment>
<comment type="catalytic activity">
    <reaction evidence="1">
        <text>[ThiS sulfur-carrier protein]-C-terminal-Gly-aminoethanethioate + 2-iminoacetate + 1-deoxy-D-xylulose 5-phosphate = [ThiS sulfur-carrier protein]-C-terminal Gly-Gly + 2-[(2R,5Z)-2-carboxy-4-methylthiazol-5(2H)-ylidene]ethyl phosphate + 2 H2O + H(+)</text>
        <dbReference type="Rhea" id="RHEA:26297"/>
        <dbReference type="Rhea" id="RHEA-COMP:12909"/>
        <dbReference type="Rhea" id="RHEA-COMP:19908"/>
        <dbReference type="ChEBI" id="CHEBI:15377"/>
        <dbReference type="ChEBI" id="CHEBI:15378"/>
        <dbReference type="ChEBI" id="CHEBI:57792"/>
        <dbReference type="ChEBI" id="CHEBI:62899"/>
        <dbReference type="ChEBI" id="CHEBI:77846"/>
        <dbReference type="ChEBI" id="CHEBI:90778"/>
        <dbReference type="ChEBI" id="CHEBI:232372"/>
        <dbReference type="EC" id="2.8.1.10"/>
    </reaction>
</comment>
<comment type="pathway">
    <text evidence="1">Cofactor biosynthesis; thiamine diphosphate biosynthesis.</text>
</comment>
<comment type="subunit">
    <text evidence="1">Homotetramer. Forms heterodimers with either ThiH or ThiS.</text>
</comment>
<comment type="subcellular location">
    <subcellularLocation>
        <location evidence="1">Cytoplasm</location>
    </subcellularLocation>
</comment>
<comment type="similarity">
    <text evidence="1">Belongs to the ThiG family.</text>
</comment>